<protein>
    <recommendedName>
        <fullName evidence="1">NAD kinase 2</fullName>
        <ecNumber evidence="1">2.7.1.23</ecNumber>
    </recommendedName>
    <alternativeName>
        <fullName evidence="1">ATP-dependent NAD kinase 2</fullName>
    </alternativeName>
</protein>
<evidence type="ECO:0000255" key="1">
    <source>
        <dbReference type="HAMAP-Rule" id="MF_00361"/>
    </source>
</evidence>
<feature type="chain" id="PRO_0000229675" description="NAD kinase 2">
    <location>
        <begin position="1"/>
        <end position="302"/>
    </location>
</feature>
<feature type="active site" description="Proton acceptor" evidence="1">
    <location>
        <position position="79"/>
    </location>
</feature>
<feature type="binding site" evidence="1">
    <location>
        <begin position="79"/>
        <end position="80"/>
    </location>
    <ligand>
        <name>NAD(+)</name>
        <dbReference type="ChEBI" id="CHEBI:57540"/>
    </ligand>
</feature>
<feature type="binding site" evidence="1">
    <location>
        <begin position="153"/>
        <end position="154"/>
    </location>
    <ligand>
        <name>NAD(+)</name>
        <dbReference type="ChEBI" id="CHEBI:57540"/>
    </ligand>
</feature>
<feature type="binding site" evidence="1">
    <location>
        <position position="183"/>
    </location>
    <ligand>
        <name>NAD(+)</name>
        <dbReference type="ChEBI" id="CHEBI:57540"/>
    </ligand>
</feature>
<feature type="binding site" evidence="1">
    <location>
        <begin position="194"/>
        <end position="199"/>
    </location>
    <ligand>
        <name>NAD(+)</name>
        <dbReference type="ChEBI" id="CHEBI:57540"/>
    </ligand>
</feature>
<feature type="binding site" evidence="1">
    <location>
        <position position="218"/>
    </location>
    <ligand>
        <name>NAD(+)</name>
        <dbReference type="ChEBI" id="CHEBI:57540"/>
    </ligand>
</feature>
<feature type="binding site" evidence="1">
    <location>
        <position position="252"/>
    </location>
    <ligand>
        <name>NAD(+)</name>
        <dbReference type="ChEBI" id="CHEBI:57540"/>
    </ligand>
</feature>
<organism>
    <name type="scientific">Prochlorococcus marinus subsp. pastoris (strain CCMP1986 / NIES-2087 / MED4)</name>
    <dbReference type="NCBI Taxonomy" id="59919"/>
    <lineage>
        <taxon>Bacteria</taxon>
        <taxon>Bacillati</taxon>
        <taxon>Cyanobacteriota</taxon>
        <taxon>Cyanophyceae</taxon>
        <taxon>Synechococcales</taxon>
        <taxon>Prochlorococcaceae</taxon>
        <taxon>Prochlorococcus</taxon>
    </lineage>
</organism>
<reference key="1">
    <citation type="journal article" date="2003" name="Nature">
        <title>Genome divergence in two Prochlorococcus ecotypes reflects oceanic niche differentiation.</title>
        <authorList>
            <person name="Rocap G."/>
            <person name="Larimer F.W."/>
            <person name="Lamerdin J.E."/>
            <person name="Malfatti S."/>
            <person name="Chain P."/>
            <person name="Ahlgren N.A."/>
            <person name="Arellano A."/>
            <person name="Coleman M."/>
            <person name="Hauser L."/>
            <person name="Hess W.R."/>
            <person name="Johnson Z.I."/>
            <person name="Land M.L."/>
            <person name="Lindell D."/>
            <person name="Post A.F."/>
            <person name="Regala W."/>
            <person name="Shah M."/>
            <person name="Shaw S.L."/>
            <person name="Steglich C."/>
            <person name="Sullivan M.B."/>
            <person name="Ting C.S."/>
            <person name="Tolonen A."/>
            <person name="Webb E.A."/>
            <person name="Zinser E.R."/>
            <person name="Chisholm S.W."/>
        </authorList>
    </citation>
    <scope>NUCLEOTIDE SEQUENCE [LARGE SCALE GENOMIC DNA]</scope>
    <source>
        <strain>CCMP1986 / NIES-2087 / MED4</strain>
    </source>
</reference>
<accession>Q7V0I8</accession>
<sequence length="302" mass="33004">MVRKAGLIVNDGKELAVQTAISVQKKLEKSNYEVVRVSSSGGMVGFANPDQHVRPLGYSNCVPEGFDSSMEFAIVLGGDGTVLSAARQTAPAKIPILTINTGHLGFLAEAYLSNLEEAIDKLIIGKWDIEERKSLIISVMRNEQRRWESLCLNEMALHREPLTSMCHFEISIGRHAPVDISADGVILSTPTGSTAYSLSAGGPVITPDCPVVQLTPIAPHSLASRALVFNDSEPVTVFPATPERLVMVVDGNAGCYVWPEDRVLIRKSKHSVKFIRLEDHEFFQVLRNKLGWGLPHVGKPNK</sequence>
<keyword id="KW-0067">ATP-binding</keyword>
<keyword id="KW-0963">Cytoplasm</keyword>
<keyword id="KW-0418">Kinase</keyword>
<keyword id="KW-0520">NAD</keyword>
<keyword id="KW-0521">NADP</keyword>
<keyword id="KW-0547">Nucleotide-binding</keyword>
<keyword id="KW-0808">Transferase</keyword>
<dbReference type="EC" id="2.7.1.23" evidence="1"/>
<dbReference type="EMBL" id="BX548174">
    <property type="protein sequence ID" value="CAE19728.1"/>
    <property type="molecule type" value="Genomic_DNA"/>
</dbReference>
<dbReference type="RefSeq" id="WP_011132903.1">
    <property type="nucleotide sequence ID" value="NC_005072.1"/>
</dbReference>
<dbReference type="SMR" id="Q7V0I8"/>
<dbReference type="STRING" id="59919.PMM1269"/>
<dbReference type="KEGG" id="pmm:PMM1269"/>
<dbReference type="eggNOG" id="COG0061">
    <property type="taxonomic scope" value="Bacteria"/>
</dbReference>
<dbReference type="HOGENOM" id="CLU_008831_0_1_3"/>
<dbReference type="OrthoDB" id="9774737at2"/>
<dbReference type="Proteomes" id="UP000001026">
    <property type="component" value="Chromosome"/>
</dbReference>
<dbReference type="GO" id="GO:0005737">
    <property type="term" value="C:cytoplasm"/>
    <property type="evidence" value="ECO:0007669"/>
    <property type="project" value="UniProtKB-SubCell"/>
</dbReference>
<dbReference type="GO" id="GO:0005524">
    <property type="term" value="F:ATP binding"/>
    <property type="evidence" value="ECO:0007669"/>
    <property type="project" value="UniProtKB-KW"/>
</dbReference>
<dbReference type="GO" id="GO:0046872">
    <property type="term" value="F:metal ion binding"/>
    <property type="evidence" value="ECO:0007669"/>
    <property type="project" value="UniProtKB-UniRule"/>
</dbReference>
<dbReference type="GO" id="GO:0051287">
    <property type="term" value="F:NAD binding"/>
    <property type="evidence" value="ECO:0007669"/>
    <property type="project" value="UniProtKB-ARBA"/>
</dbReference>
<dbReference type="GO" id="GO:0003951">
    <property type="term" value="F:NAD+ kinase activity"/>
    <property type="evidence" value="ECO:0007669"/>
    <property type="project" value="UniProtKB-UniRule"/>
</dbReference>
<dbReference type="GO" id="GO:0019674">
    <property type="term" value="P:NAD metabolic process"/>
    <property type="evidence" value="ECO:0007669"/>
    <property type="project" value="InterPro"/>
</dbReference>
<dbReference type="GO" id="GO:0006741">
    <property type="term" value="P:NADP biosynthetic process"/>
    <property type="evidence" value="ECO:0007669"/>
    <property type="project" value="UniProtKB-UniRule"/>
</dbReference>
<dbReference type="Gene3D" id="3.40.50.10330">
    <property type="entry name" value="Probable inorganic polyphosphate/atp-NAD kinase, domain 1"/>
    <property type="match status" value="1"/>
</dbReference>
<dbReference type="Gene3D" id="2.60.200.30">
    <property type="entry name" value="Probable inorganic polyphosphate/atp-NAD kinase, domain 2"/>
    <property type="match status" value="1"/>
</dbReference>
<dbReference type="HAMAP" id="MF_00361">
    <property type="entry name" value="NAD_kinase"/>
    <property type="match status" value="1"/>
</dbReference>
<dbReference type="InterPro" id="IPR017438">
    <property type="entry name" value="ATP-NAD_kinase_N"/>
</dbReference>
<dbReference type="InterPro" id="IPR017437">
    <property type="entry name" value="ATP-NAD_kinase_PpnK-typ_C"/>
</dbReference>
<dbReference type="InterPro" id="IPR016064">
    <property type="entry name" value="NAD/diacylglycerol_kinase_sf"/>
</dbReference>
<dbReference type="InterPro" id="IPR002504">
    <property type="entry name" value="NADK"/>
</dbReference>
<dbReference type="NCBIfam" id="NF002732">
    <property type="entry name" value="PRK02649.1"/>
    <property type="match status" value="1"/>
</dbReference>
<dbReference type="PANTHER" id="PTHR20275">
    <property type="entry name" value="NAD KINASE"/>
    <property type="match status" value="1"/>
</dbReference>
<dbReference type="PANTHER" id="PTHR20275:SF13">
    <property type="entry name" value="NAD KINASE 2"/>
    <property type="match status" value="1"/>
</dbReference>
<dbReference type="Pfam" id="PF01513">
    <property type="entry name" value="NAD_kinase"/>
    <property type="match status" value="1"/>
</dbReference>
<dbReference type="Pfam" id="PF20143">
    <property type="entry name" value="NAD_kinase_C"/>
    <property type="match status" value="1"/>
</dbReference>
<dbReference type="SUPFAM" id="SSF111331">
    <property type="entry name" value="NAD kinase/diacylglycerol kinase-like"/>
    <property type="match status" value="1"/>
</dbReference>
<comment type="function">
    <text evidence="1">Involved in the regulation of the intracellular balance of NAD and NADP, and is a key enzyme in the biosynthesis of NADP. Catalyzes specifically the phosphorylation on 2'-hydroxyl of the adenosine moiety of NAD to yield NADP.</text>
</comment>
<comment type="catalytic activity">
    <reaction evidence="1">
        <text>NAD(+) + ATP = ADP + NADP(+) + H(+)</text>
        <dbReference type="Rhea" id="RHEA:18629"/>
        <dbReference type="ChEBI" id="CHEBI:15378"/>
        <dbReference type="ChEBI" id="CHEBI:30616"/>
        <dbReference type="ChEBI" id="CHEBI:57540"/>
        <dbReference type="ChEBI" id="CHEBI:58349"/>
        <dbReference type="ChEBI" id="CHEBI:456216"/>
        <dbReference type="EC" id="2.7.1.23"/>
    </reaction>
</comment>
<comment type="cofactor">
    <cofactor evidence="1">
        <name>a divalent metal cation</name>
        <dbReference type="ChEBI" id="CHEBI:60240"/>
    </cofactor>
</comment>
<comment type="subcellular location">
    <subcellularLocation>
        <location evidence="1">Cytoplasm</location>
    </subcellularLocation>
</comment>
<comment type="similarity">
    <text evidence="1">Belongs to the NAD kinase family.</text>
</comment>
<gene>
    <name evidence="1" type="primary">nadK2</name>
    <name type="ordered locus">PMM1269</name>
</gene>
<name>NADK2_PROMP</name>
<proteinExistence type="inferred from homology"/>